<organism>
    <name type="scientific">Streptococcus pneumoniae serotype 2 (strain D39 / NCTC 7466)</name>
    <dbReference type="NCBI Taxonomy" id="373153"/>
    <lineage>
        <taxon>Bacteria</taxon>
        <taxon>Bacillati</taxon>
        <taxon>Bacillota</taxon>
        <taxon>Bacilli</taxon>
        <taxon>Lactobacillales</taxon>
        <taxon>Streptococcaceae</taxon>
        <taxon>Streptococcus</taxon>
    </lineage>
</organism>
<proteinExistence type="inferred from homology"/>
<keyword id="KW-1185">Reference proteome</keyword>
<keyword id="KW-0687">Ribonucleoprotein</keyword>
<keyword id="KW-0689">Ribosomal protein</keyword>
<keyword id="KW-0694">RNA-binding</keyword>
<keyword id="KW-0699">rRNA-binding</keyword>
<protein>
    <recommendedName>
        <fullName evidence="1">Large ribosomal subunit protein uL10</fullName>
    </recommendedName>
    <alternativeName>
        <fullName evidence="2">50S ribosomal protein L10</fullName>
    </alternativeName>
</protein>
<evidence type="ECO:0000255" key="1">
    <source>
        <dbReference type="HAMAP-Rule" id="MF_00362"/>
    </source>
</evidence>
<evidence type="ECO:0000305" key="2"/>
<comment type="function">
    <text evidence="1">Forms part of the ribosomal stalk, playing a central role in the interaction of the ribosome with GTP-bound translation factors.</text>
</comment>
<comment type="subunit">
    <text evidence="1">Part of the ribosomal stalk of the 50S ribosomal subunit. The N-terminus interacts with L11 and the large rRNA to form the base of the stalk. The C-terminus forms an elongated spine to which L12 dimers bind in a sequential fashion forming a multimeric L10(L12)X complex.</text>
</comment>
<comment type="similarity">
    <text evidence="1">Belongs to the universal ribosomal protein uL10 family.</text>
</comment>
<sequence length="166" mass="17479">MSEAIIAKKAELVDVVAEKMKAAASIVVVDARGLTVEQDTVLRRELRGSEVEYKVIKNSILRRAAEKAGLEDLASVFVGPSAVAFSNEDVIAPAKILNDFSKNAEALEIKGGAIEGAVASKEEILALATLPNREGLLSMLLSVLQAPVRNVALAVKAVAESKEDAA</sequence>
<dbReference type="EMBL" id="CP000410">
    <property type="protein sequence ID" value="ABJ54946.1"/>
    <property type="molecule type" value="Genomic_DNA"/>
</dbReference>
<dbReference type="RefSeq" id="WP_001287278.1">
    <property type="nucleotide sequence ID" value="NZ_JAMLJR010000005.1"/>
</dbReference>
<dbReference type="SMR" id="Q04JZ3"/>
<dbReference type="PaxDb" id="373153-SPD_1188"/>
<dbReference type="GeneID" id="45653385"/>
<dbReference type="KEGG" id="spd:SPD_1188"/>
<dbReference type="eggNOG" id="COG0244">
    <property type="taxonomic scope" value="Bacteria"/>
</dbReference>
<dbReference type="HOGENOM" id="CLU_092227_2_0_9"/>
<dbReference type="BioCyc" id="SPNE373153:G1G6V-1284-MONOMER"/>
<dbReference type="Proteomes" id="UP000001452">
    <property type="component" value="Chromosome"/>
</dbReference>
<dbReference type="GO" id="GO:0015934">
    <property type="term" value="C:large ribosomal subunit"/>
    <property type="evidence" value="ECO:0007669"/>
    <property type="project" value="InterPro"/>
</dbReference>
<dbReference type="GO" id="GO:0070180">
    <property type="term" value="F:large ribosomal subunit rRNA binding"/>
    <property type="evidence" value="ECO:0007669"/>
    <property type="project" value="UniProtKB-UniRule"/>
</dbReference>
<dbReference type="GO" id="GO:0003735">
    <property type="term" value="F:structural constituent of ribosome"/>
    <property type="evidence" value="ECO:0007669"/>
    <property type="project" value="InterPro"/>
</dbReference>
<dbReference type="GO" id="GO:0006412">
    <property type="term" value="P:translation"/>
    <property type="evidence" value="ECO:0007669"/>
    <property type="project" value="UniProtKB-UniRule"/>
</dbReference>
<dbReference type="CDD" id="cd05797">
    <property type="entry name" value="Ribosomal_L10"/>
    <property type="match status" value="1"/>
</dbReference>
<dbReference type="FunFam" id="3.30.70.1730:FF:000001">
    <property type="entry name" value="50S ribosomal protein L10"/>
    <property type="match status" value="1"/>
</dbReference>
<dbReference type="Gene3D" id="3.30.70.1730">
    <property type="match status" value="1"/>
</dbReference>
<dbReference type="HAMAP" id="MF_00362">
    <property type="entry name" value="Ribosomal_uL10"/>
    <property type="match status" value="1"/>
</dbReference>
<dbReference type="InterPro" id="IPR001790">
    <property type="entry name" value="Ribosomal_uL10"/>
</dbReference>
<dbReference type="InterPro" id="IPR043141">
    <property type="entry name" value="Ribosomal_uL10-like_sf"/>
</dbReference>
<dbReference type="InterPro" id="IPR022973">
    <property type="entry name" value="Ribosomal_uL10_bac"/>
</dbReference>
<dbReference type="InterPro" id="IPR047865">
    <property type="entry name" value="Ribosomal_uL10_bac_type"/>
</dbReference>
<dbReference type="InterPro" id="IPR002363">
    <property type="entry name" value="Ribosomal_uL10_CS_bac"/>
</dbReference>
<dbReference type="NCBIfam" id="NF000955">
    <property type="entry name" value="PRK00099.1-1"/>
    <property type="match status" value="1"/>
</dbReference>
<dbReference type="PANTHER" id="PTHR11560">
    <property type="entry name" value="39S RIBOSOMAL PROTEIN L10, MITOCHONDRIAL"/>
    <property type="match status" value="1"/>
</dbReference>
<dbReference type="Pfam" id="PF00466">
    <property type="entry name" value="Ribosomal_L10"/>
    <property type="match status" value="1"/>
</dbReference>
<dbReference type="SUPFAM" id="SSF160369">
    <property type="entry name" value="Ribosomal protein L10-like"/>
    <property type="match status" value="1"/>
</dbReference>
<dbReference type="PROSITE" id="PS01109">
    <property type="entry name" value="RIBOSOMAL_L10"/>
    <property type="match status" value="1"/>
</dbReference>
<gene>
    <name evidence="1" type="primary">rplJ</name>
    <name type="ordered locus">SPD_1188</name>
</gene>
<accession>Q04JZ3</accession>
<reference key="1">
    <citation type="journal article" date="2007" name="J. Bacteriol.">
        <title>Genome sequence of Avery's virulent serotype 2 strain D39 of Streptococcus pneumoniae and comparison with that of unencapsulated laboratory strain R6.</title>
        <authorList>
            <person name="Lanie J.A."/>
            <person name="Ng W.-L."/>
            <person name="Kazmierczak K.M."/>
            <person name="Andrzejewski T.M."/>
            <person name="Davidsen T.M."/>
            <person name="Wayne K.J."/>
            <person name="Tettelin H."/>
            <person name="Glass J.I."/>
            <person name="Winkler M.E."/>
        </authorList>
    </citation>
    <scope>NUCLEOTIDE SEQUENCE [LARGE SCALE GENOMIC DNA]</scope>
    <source>
        <strain>D39 / NCTC 7466</strain>
    </source>
</reference>
<feature type="chain" id="PRO_1000005604" description="Large ribosomal subunit protein uL10">
    <location>
        <begin position="1"/>
        <end position="166"/>
    </location>
</feature>
<name>RL10_STRP2</name>